<feature type="chain" id="PRO_1000130341" description="Ribosomal RNA small subunit methyltransferase A">
    <location>
        <begin position="1"/>
        <end position="272"/>
    </location>
</feature>
<feature type="binding site" evidence="1">
    <location>
        <position position="18"/>
    </location>
    <ligand>
        <name>S-adenosyl-L-methionine</name>
        <dbReference type="ChEBI" id="CHEBI:59789"/>
    </ligand>
</feature>
<feature type="binding site" evidence="1">
    <location>
        <position position="20"/>
    </location>
    <ligand>
        <name>S-adenosyl-L-methionine</name>
        <dbReference type="ChEBI" id="CHEBI:59789"/>
    </ligand>
</feature>
<feature type="binding site" evidence="1">
    <location>
        <position position="45"/>
    </location>
    <ligand>
        <name>S-adenosyl-L-methionine</name>
        <dbReference type="ChEBI" id="CHEBI:59789"/>
    </ligand>
</feature>
<feature type="binding site" evidence="1">
    <location>
        <position position="66"/>
    </location>
    <ligand>
        <name>S-adenosyl-L-methionine</name>
        <dbReference type="ChEBI" id="CHEBI:59789"/>
    </ligand>
</feature>
<feature type="binding site" evidence="1">
    <location>
        <position position="91"/>
    </location>
    <ligand>
        <name>S-adenosyl-L-methionine</name>
        <dbReference type="ChEBI" id="CHEBI:59789"/>
    </ligand>
</feature>
<feature type="binding site" evidence="1">
    <location>
        <position position="113"/>
    </location>
    <ligand>
        <name>S-adenosyl-L-methionine</name>
        <dbReference type="ChEBI" id="CHEBI:59789"/>
    </ligand>
</feature>
<gene>
    <name evidence="1" type="primary">rsmA</name>
    <name evidence="1" type="synonym">ksgA</name>
    <name type="ordered locus">YpAngola_A0772</name>
</gene>
<accession>A9QZZ0</accession>
<proteinExistence type="inferred from homology"/>
<dbReference type="EC" id="2.1.1.182" evidence="1"/>
<dbReference type="EMBL" id="CP000901">
    <property type="protein sequence ID" value="ABX87946.1"/>
    <property type="molecule type" value="Genomic_DNA"/>
</dbReference>
<dbReference type="RefSeq" id="WP_002210490.1">
    <property type="nucleotide sequence ID" value="NZ_CP009935.1"/>
</dbReference>
<dbReference type="SMR" id="A9QZZ0"/>
<dbReference type="GeneID" id="57974118"/>
<dbReference type="KEGG" id="ypg:YpAngola_A0772"/>
<dbReference type="PATRIC" id="fig|349746.12.peg.1719"/>
<dbReference type="GO" id="GO:0005829">
    <property type="term" value="C:cytosol"/>
    <property type="evidence" value="ECO:0007669"/>
    <property type="project" value="TreeGrafter"/>
</dbReference>
<dbReference type="GO" id="GO:0052908">
    <property type="term" value="F:16S rRNA (adenine(1518)-N(6)/adenine(1519)-N(6))-dimethyltransferase activity"/>
    <property type="evidence" value="ECO:0007669"/>
    <property type="project" value="UniProtKB-EC"/>
</dbReference>
<dbReference type="GO" id="GO:0003723">
    <property type="term" value="F:RNA binding"/>
    <property type="evidence" value="ECO:0007669"/>
    <property type="project" value="UniProtKB-KW"/>
</dbReference>
<dbReference type="CDD" id="cd02440">
    <property type="entry name" value="AdoMet_MTases"/>
    <property type="match status" value="1"/>
</dbReference>
<dbReference type="FunFam" id="1.10.8.100:FF:000001">
    <property type="entry name" value="Ribosomal RNA small subunit methyltransferase A"/>
    <property type="match status" value="1"/>
</dbReference>
<dbReference type="FunFam" id="3.40.50.150:FF:000006">
    <property type="entry name" value="Ribosomal RNA small subunit methyltransferase A"/>
    <property type="match status" value="1"/>
</dbReference>
<dbReference type="Gene3D" id="1.10.8.100">
    <property type="entry name" value="Ribosomal RNA adenine dimethylase-like, domain 2"/>
    <property type="match status" value="1"/>
</dbReference>
<dbReference type="Gene3D" id="3.40.50.150">
    <property type="entry name" value="Vaccinia Virus protein VP39"/>
    <property type="match status" value="1"/>
</dbReference>
<dbReference type="HAMAP" id="MF_00607">
    <property type="entry name" value="16SrRNA_methyltr_A"/>
    <property type="match status" value="1"/>
</dbReference>
<dbReference type="InterPro" id="IPR001737">
    <property type="entry name" value="KsgA/Erm"/>
</dbReference>
<dbReference type="InterPro" id="IPR023165">
    <property type="entry name" value="rRNA_Ade_diMease-like_C"/>
</dbReference>
<dbReference type="InterPro" id="IPR020596">
    <property type="entry name" value="rRNA_Ade_Mease_Trfase_CS"/>
</dbReference>
<dbReference type="InterPro" id="IPR020598">
    <property type="entry name" value="rRNA_Ade_methylase_Trfase_N"/>
</dbReference>
<dbReference type="InterPro" id="IPR011530">
    <property type="entry name" value="rRNA_adenine_dimethylase"/>
</dbReference>
<dbReference type="InterPro" id="IPR029063">
    <property type="entry name" value="SAM-dependent_MTases_sf"/>
</dbReference>
<dbReference type="NCBIfam" id="TIGR00755">
    <property type="entry name" value="ksgA"/>
    <property type="match status" value="1"/>
</dbReference>
<dbReference type="PANTHER" id="PTHR11727">
    <property type="entry name" value="DIMETHYLADENOSINE TRANSFERASE"/>
    <property type="match status" value="1"/>
</dbReference>
<dbReference type="PANTHER" id="PTHR11727:SF7">
    <property type="entry name" value="DIMETHYLADENOSINE TRANSFERASE-RELATED"/>
    <property type="match status" value="1"/>
</dbReference>
<dbReference type="Pfam" id="PF00398">
    <property type="entry name" value="RrnaAD"/>
    <property type="match status" value="1"/>
</dbReference>
<dbReference type="SMART" id="SM00650">
    <property type="entry name" value="rADc"/>
    <property type="match status" value="1"/>
</dbReference>
<dbReference type="SUPFAM" id="SSF53335">
    <property type="entry name" value="S-adenosyl-L-methionine-dependent methyltransferases"/>
    <property type="match status" value="1"/>
</dbReference>
<dbReference type="PROSITE" id="PS01131">
    <property type="entry name" value="RRNA_A_DIMETH"/>
    <property type="match status" value="1"/>
</dbReference>
<dbReference type="PROSITE" id="PS51689">
    <property type="entry name" value="SAM_RNA_A_N6_MT"/>
    <property type="match status" value="1"/>
</dbReference>
<keyword id="KW-0963">Cytoplasm</keyword>
<keyword id="KW-0489">Methyltransferase</keyword>
<keyword id="KW-0694">RNA-binding</keyword>
<keyword id="KW-0698">rRNA processing</keyword>
<keyword id="KW-0949">S-adenosyl-L-methionine</keyword>
<keyword id="KW-0808">Transferase</keyword>
<comment type="function">
    <text evidence="1">Specifically dimethylates two adjacent adenosines (A1518 and A1519) in the loop of a conserved hairpin near the 3'-end of 16S rRNA in the 30S particle. May play a critical role in biogenesis of 30S subunits.</text>
</comment>
<comment type="catalytic activity">
    <reaction evidence="1">
        <text>adenosine(1518)/adenosine(1519) in 16S rRNA + 4 S-adenosyl-L-methionine = N(6)-dimethyladenosine(1518)/N(6)-dimethyladenosine(1519) in 16S rRNA + 4 S-adenosyl-L-homocysteine + 4 H(+)</text>
        <dbReference type="Rhea" id="RHEA:19609"/>
        <dbReference type="Rhea" id="RHEA-COMP:10232"/>
        <dbReference type="Rhea" id="RHEA-COMP:10233"/>
        <dbReference type="ChEBI" id="CHEBI:15378"/>
        <dbReference type="ChEBI" id="CHEBI:57856"/>
        <dbReference type="ChEBI" id="CHEBI:59789"/>
        <dbReference type="ChEBI" id="CHEBI:74411"/>
        <dbReference type="ChEBI" id="CHEBI:74493"/>
        <dbReference type="EC" id="2.1.1.182"/>
    </reaction>
</comment>
<comment type="subcellular location">
    <subcellularLocation>
        <location evidence="1">Cytoplasm</location>
    </subcellularLocation>
</comment>
<comment type="similarity">
    <text evidence="1">Belongs to the class I-like SAM-binding methyltransferase superfamily. rRNA adenine N(6)-methyltransferase family. RsmA subfamily.</text>
</comment>
<organism>
    <name type="scientific">Yersinia pestis bv. Antiqua (strain Angola)</name>
    <dbReference type="NCBI Taxonomy" id="349746"/>
    <lineage>
        <taxon>Bacteria</taxon>
        <taxon>Pseudomonadati</taxon>
        <taxon>Pseudomonadota</taxon>
        <taxon>Gammaproteobacteria</taxon>
        <taxon>Enterobacterales</taxon>
        <taxon>Yersiniaceae</taxon>
        <taxon>Yersinia</taxon>
    </lineage>
</organism>
<reference key="1">
    <citation type="journal article" date="2010" name="J. Bacteriol.">
        <title>Genome sequence of the deep-rooted Yersinia pestis strain Angola reveals new insights into the evolution and pangenome of the plague bacterium.</title>
        <authorList>
            <person name="Eppinger M."/>
            <person name="Worsham P.L."/>
            <person name="Nikolich M.P."/>
            <person name="Riley D.R."/>
            <person name="Sebastian Y."/>
            <person name="Mou S."/>
            <person name="Achtman M."/>
            <person name="Lindler L.E."/>
            <person name="Ravel J."/>
        </authorList>
    </citation>
    <scope>NUCLEOTIDE SEQUENCE [LARGE SCALE GENOMIC DNA]</scope>
    <source>
        <strain>Angola</strain>
    </source>
</reference>
<protein>
    <recommendedName>
        <fullName evidence="1">Ribosomal RNA small subunit methyltransferase A</fullName>
        <ecNumber evidence="1">2.1.1.182</ecNumber>
    </recommendedName>
    <alternativeName>
        <fullName evidence="1">16S rRNA (adenine(1518)-N(6)/adenine(1519)-N(6))-dimethyltransferase</fullName>
    </alternativeName>
    <alternativeName>
        <fullName evidence="1">16S rRNA dimethyladenosine transferase</fullName>
    </alternativeName>
    <alternativeName>
        <fullName evidence="1">16S rRNA dimethylase</fullName>
    </alternativeName>
    <alternativeName>
        <fullName evidence="1">S-adenosylmethionine-6-N', N'-adenosyl(rRNA) dimethyltransferase</fullName>
    </alternativeName>
</protein>
<name>RSMA_YERPG</name>
<evidence type="ECO:0000255" key="1">
    <source>
        <dbReference type="HAMAP-Rule" id="MF_00607"/>
    </source>
</evidence>
<sequence>MNNRVHQGHFARKRFGQNFLNDQFVIDSIVSAIHPVPGEAVVEIGPGLGALTEPVAARMDHMTVIELDRDLAARLASHPQLKDKLTIHQQDAMKVNFSELSEQAGQPLRVFGNLPYNISTPLMFHLFSYTDAIRDMHFMLQKEVVNRLVAGPNSKTYGRLTVMAQYYCNVIPVLEVPPTAFTPAPKVDSAVVRLIPHVQMPHPVGDVRMLSRITTQAFNQRRKTVRNSLGDLFTSEQLIELGIDPILRAENISVAQYCKLANWLSAQSTPQK</sequence>